<proteinExistence type="evidence at transcript level"/>
<sequence length="160" mass="18124">MEEGSSSPVSPVDSLGTSEEELERQPKRFGRKRRYSKKSSEDGSPTPGKRGKKGSPSAQSFEELQSQRILANVRERQRTQSLNEAFAALRKIIPTLPSDKLSKIQTLKLAARYIDFLYQVLQSDEMDNKMTSCSYVAHERLSYAFSVWRMEGAWSMSASH</sequence>
<organism>
    <name type="scientific">Rattus norvegicus</name>
    <name type="common">Rat</name>
    <dbReference type="NCBI Taxonomy" id="10116"/>
    <lineage>
        <taxon>Eukaryota</taxon>
        <taxon>Metazoa</taxon>
        <taxon>Chordata</taxon>
        <taxon>Craniata</taxon>
        <taxon>Vertebrata</taxon>
        <taxon>Euteleostomi</taxon>
        <taxon>Mammalia</taxon>
        <taxon>Eutheria</taxon>
        <taxon>Euarchontoglires</taxon>
        <taxon>Glires</taxon>
        <taxon>Rodentia</taxon>
        <taxon>Myomorpha</taxon>
        <taxon>Muroidea</taxon>
        <taxon>Muridae</taxon>
        <taxon>Murinae</taxon>
        <taxon>Rattus</taxon>
    </lineage>
</organism>
<keyword id="KW-0963">Cytoplasm</keyword>
<keyword id="KW-0217">Developmental protein</keyword>
<keyword id="KW-0221">Differentiation</keyword>
<keyword id="KW-0238">DNA-binding</keyword>
<keyword id="KW-0539">Nucleus</keyword>
<keyword id="KW-1185">Reference proteome</keyword>
<keyword id="KW-0678">Repressor</keyword>
<keyword id="KW-0804">Transcription</keyword>
<keyword id="KW-0805">Transcription regulation</keyword>
<reference key="1">
    <citation type="submission" date="1999-01" db="EMBL/GenBank/DDBJ databases">
        <title>Expression of helix-loop-helix proteins in vascular smooth muscle.</title>
        <authorList>
            <person name="Kemp P."/>
            <person name="Grainger D."/>
            <person name="Metcalfe J."/>
        </authorList>
    </citation>
    <scope>NUCLEOTIDE SEQUENCE [MRNA]</scope>
    <source>
        <strain evidence="4">Wistar</strain>
        <tissue evidence="4">Aorta</tissue>
    </source>
</reference>
<evidence type="ECO:0000250" key="1"/>
<evidence type="ECO:0000255" key="2">
    <source>
        <dbReference type="PROSITE-ProRule" id="PRU00981"/>
    </source>
</evidence>
<evidence type="ECO:0000256" key="3">
    <source>
        <dbReference type="SAM" id="MobiDB-lite"/>
    </source>
</evidence>
<evidence type="ECO:0000305" key="4"/>
<accession>P97831</accession>
<accession>Q60981</accession>
<dbReference type="EMBL" id="Y08139">
    <property type="protein sequence ID" value="CAA69333.1"/>
    <property type="molecule type" value="mRNA"/>
</dbReference>
<dbReference type="RefSeq" id="NP_067723.1">
    <property type="nucleotide sequence ID" value="NM_021691.2"/>
</dbReference>
<dbReference type="SMR" id="P97831"/>
<dbReference type="FunCoup" id="P97831">
    <property type="interactions" value="64"/>
</dbReference>
<dbReference type="STRING" id="10116.ENSRNOP00000027597"/>
<dbReference type="GlyGen" id="P97831">
    <property type="glycosylation" value="1 site"/>
</dbReference>
<dbReference type="PhosphoSitePlus" id="P97831"/>
<dbReference type="PaxDb" id="10116-ENSRNOP00000027597"/>
<dbReference type="Ensembl" id="ENSRNOT00000027597.5">
    <property type="protein sequence ID" value="ENSRNOP00000027597.4"/>
    <property type="gene ID" value="ENSRNOG00000020355.5"/>
</dbReference>
<dbReference type="GeneID" id="59327"/>
<dbReference type="KEGG" id="rno:59327"/>
<dbReference type="AGR" id="RGD:621286"/>
<dbReference type="CTD" id="117581"/>
<dbReference type="RGD" id="621286">
    <property type="gene designation" value="Twist2"/>
</dbReference>
<dbReference type="eggNOG" id="KOG4447">
    <property type="taxonomic scope" value="Eukaryota"/>
</dbReference>
<dbReference type="GeneTree" id="ENSGT00940000161996"/>
<dbReference type="HOGENOM" id="CLU_112073_0_1_1"/>
<dbReference type="InParanoid" id="P97831"/>
<dbReference type="OMA" id="MPHTASI"/>
<dbReference type="OrthoDB" id="8583783at2759"/>
<dbReference type="PhylomeDB" id="P97831"/>
<dbReference type="TreeFam" id="TF315153"/>
<dbReference type="PRO" id="PR:P97831"/>
<dbReference type="Proteomes" id="UP000002494">
    <property type="component" value="Chromosome 9"/>
</dbReference>
<dbReference type="Bgee" id="ENSRNOG00000020355">
    <property type="expression patterns" value="Expressed in esophagus and 17 other cell types or tissues"/>
</dbReference>
<dbReference type="GO" id="GO:0005737">
    <property type="term" value="C:cytoplasm"/>
    <property type="evidence" value="ECO:0000250"/>
    <property type="project" value="UniProtKB"/>
</dbReference>
<dbReference type="GO" id="GO:0005634">
    <property type="term" value="C:nucleus"/>
    <property type="evidence" value="ECO:0000250"/>
    <property type="project" value="UniProtKB"/>
</dbReference>
<dbReference type="GO" id="GO:0005667">
    <property type="term" value="C:transcription regulator complex"/>
    <property type="evidence" value="ECO:0000266"/>
    <property type="project" value="RGD"/>
</dbReference>
<dbReference type="GO" id="GO:0003682">
    <property type="term" value="F:chromatin binding"/>
    <property type="evidence" value="ECO:0000266"/>
    <property type="project" value="RGD"/>
</dbReference>
<dbReference type="GO" id="GO:0003700">
    <property type="term" value="F:DNA-binding transcription factor activity"/>
    <property type="evidence" value="ECO:0000266"/>
    <property type="project" value="RGD"/>
</dbReference>
<dbReference type="GO" id="GO:0000981">
    <property type="term" value="F:DNA-binding transcription factor activity, RNA polymerase II-specific"/>
    <property type="evidence" value="ECO:0000318"/>
    <property type="project" value="GO_Central"/>
</dbReference>
<dbReference type="GO" id="GO:0046983">
    <property type="term" value="F:protein dimerization activity"/>
    <property type="evidence" value="ECO:0007669"/>
    <property type="project" value="InterPro"/>
</dbReference>
<dbReference type="GO" id="GO:0019904">
    <property type="term" value="F:protein domain specific binding"/>
    <property type="evidence" value="ECO:0000266"/>
    <property type="project" value="RGD"/>
</dbReference>
<dbReference type="GO" id="GO:0000977">
    <property type="term" value="F:RNA polymerase II transcription regulatory region sequence-specific DNA binding"/>
    <property type="evidence" value="ECO:0000318"/>
    <property type="project" value="GO_Central"/>
</dbReference>
<dbReference type="GO" id="GO:0008283">
    <property type="term" value="P:cell population proliferation"/>
    <property type="evidence" value="ECO:0000266"/>
    <property type="project" value="RGD"/>
</dbReference>
<dbReference type="GO" id="GO:0061303">
    <property type="term" value="P:cornea development in camera-type eye"/>
    <property type="evidence" value="ECO:0000266"/>
    <property type="project" value="RGD"/>
</dbReference>
<dbReference type="GO" id="GO:0032502">
    <property type="term" value="P:developmental process"/>
    <property type="evidence" value="ECO:0000318"/>
    <property type="project" value="GO_Central"/>
</dbReference>
<dbReference type="GO" id="GO:0048701">
    <property type="term" value="P:embryonic cranial skeleton morphogenesis"/>
    <property type="evidence" value="ECO:0000266"/>
    <property type="project" value="RGD"/>
</dbReference>
<dbReference type="GO" id="GO:0060325">
    <property type="term" value="P:face morphogenesis"/>
    <property type="evidence" value="ECO:0000266"/>
    <property type="project" value="RGD"/>
</dbReference>
<dbReference type="GO" id="GO:0043616">
    <property type="term" value="P:keratinocyte proliferation"/>
    <property type="evidence" value="ECO:0000266"/>
    <property type="project" value="RGD"/>
</dbReference>
<dbReference type="GO" id="GO:0030099">
    <property type="term" value="P:myeloid cell differentiation"/>
    <property type="evidence" value="ECO:0000266"/>
    <property type="project" value="RGD"/>
</dbReference>
<dbReference type="GO" id="GO:0043066">
    <property type="term" value="P:negative regulation of apoptotic process"/>
    <property type="evidence" value="ECO:0000314"/>
    <property type="project" value="RGD"/>
</dbReference>
<dbReference type="GO" id="GO:0008285">
    <property type="term" value="P:negative regulation of cell population proliferation"/>
    <property type="evidence" value="ECO:0000266"/>
    <property type="project" value="RGD"/>
</dbReference>
<dbReference type="GO" id="GO:0045892">
    <property type="term" value="P:negative regulation of DNA-templated transcription"/>
    <property type="evidence" value="ECO:0000250"/>
    <property type="project" value="UniProtKB"/>
</dbReference>
<dbReference type="GO" id="GO:0010936">
    <property type="term" value="P:negative regulation of macrophage cytokine production"/>
    <property type="evidence" value="ECO:0000266"/>
    <property type="project" value="RGD"/>
</dbReference>
<dbReference type="GO" id="GO:0045638">
    <property type="term" value="P:negative regulation of myeloid cell differentiation"/>
    <property type="evidence" value="ECO:0000266"/>
    <property type="project" value="RGD"/>
</dbReference>
<dbReference type="GO" id="GO:0045668">
    <property type="term" value="P:negative regulation of osteoblast differentiation"/>
    <property type="evidence" value="ECO:0000250"/>
    <property type="project" value="UniProtKB"/>
</dbReference>
<dbReference type="GO" id="GO:0000122">
    <property type="term" value="P:negative regulation of transcription by RNA polymerase II"/>
    <property type="evidence" value="ECO:0000266"/>
    <property type="project" value="RGD"/>
</dbReference>
<dbReference type="GO" id="GO:0032720">
    <property type="term" value="P:negative regulation of tumor necrosis factor production"/>
    <property type="evidence" value="ECO:0000266"/>
    <property type="project" value="RGD"/>
</dbReference>
<dbReference type="GO" id="GO:0001649">
    <property type="term" value="P:osteoblast differentiation"/>
    <property type="evidence" value="ECO:0000266"/>
    <property type="project" value="RGD"/>
</dbReference>
<dbReference type="GO" id="GO:0030335">
    <property type="term" value="P:positive regulation of cell migration"/>
    <property type="evidence" value="ECO:0000266"/>
    <property type="project" value="RGD"/>
</dbReference>
<dbReference type="GO" id="GO:0010838">
    <property type="term" value="P:positive regulation of keratinocyte proliferation"/>
    <property type="evidence" value="ECO:0000266"/>
    <property type="project" value="RGD"/>
</dbReference>
<dbReference type="GO" id="GO:0006357">
    <property type="term" value="P:regulation of transcription by RNA polymerase II"/>
    <property type="evidence" value="ECO:0000266"/>
    <property type="project" value="RGD"/>
</dbReference>
<dbReference type="GO" id="GO:0032868">
    <property type="term" value="P:response to insulin"/>
    <property type="evidence" value="ECO:0000270"/>
    <property type="project" value="RGD"/>
</dbReference>
<dbReference type="CDD" id="cd19700">
    <property type="entry name" value="bHLH_TS_TWIST2"/>
    <property type="match status" value="1"/>
</dbReference>
<dbReference type="FunFam" id="4.10.280.10:FF:000030">
    <property type="entry name" value="Twist transcription factor"/>
    <property type="match status" value="1"/>
</dbReference>
<dbReference type="Gene3D" id="4.10.280.10">
    <property type="entry name" value="Helix-loop-helix DNA-binding domain"/>
    <property type="match status" value="1"/>
</dbReference>
<dbReference type="InterPro" id="IPR011598">
    <property type="entry name" value="bHLH_dom"/>
</dbReference>
<dbReference type="InterPro" id="IPR050283">
    <property type="entry name" value="E-box_TF_Regulators"/>
</dbReference>
<dbReference type="InterPro" id="IPR036638">
    <property type="entry name" value="HLH_DNA-bd_sf"/>
</dbReference>
<dbReference type="InterPro" id="IPR047094">
    <property type="entry name" value="Twist2_bHLH"/>
</dbReference>
<dbReference type="PANTHER" id="PTHR23349">
    <property type="entry name" value="BASIC HELIX-LOOP-HELIX TRANSCRIPTION FACTOR, TWIST"/>
    <property type="match status" value="1"/>
</dbReference>
<dbReference type="PANTHER" id="PTHR23349:SF70">
    <property type="entry name" value="TWIST-RELATED PROTEIN 2"/>
    <property type="match status" value="1"/>
</dbReference>
<dbReference type="Pfam" id="PF00010">
    <property type="entry name" value="HLH"/>
    <property type="match status" value="1"/>
</dbReference>
<dbReference type="SMART" id="SM00353">
    <property type="entry name" value="HLH"/>
    <property type="match status" value="1"/>
</dbReference>
<dbReference type="SUPFAM" id="SSF47459">
    <property type="entry name" value="HLH, helix-loop-helix DNA-binding domain"/>
    <property type="match status" value="1"/>
</dbReference>
<dbReference type="PROSITE" id="PS50888">
    <property type="entry name" value="BHLH"/>
    <property type="match status" value="1"/>
</dbReference>
<feature type="chain" id="PRO_0000127491" description="Twist-related protein 2">
    <location>
        <begin position="1"/>
        <end position="160"/>
    </location>
</feature>
<feature type="domain" description="bHLH" evidence="2">
    <location>
        <begin position="66"/>
        <end position="117"/>
    </location>
</feature>
<feature type="region of interest" description="Disordered" evidence="3">
    <location>
        <begin position="1"/>
        <end position="63"/>
    </location>
</feature>
<feature type="compositionally biased region" description="Basic residues" evidence="3">
    <location>
        <begin position="27"/>
        <end position="37"/>
    </location>
</feature>
<protein>
    <recommendedName>
        <fullName>Twist-related protein 2</fullName>
    </recommendedName>
</protein>
<comment type="function">
    <text evidence="1">Binds to the E-box consensus sequence 5'-CANNTG-3' as a heterodimer and inhibits transcriptional activation by MYOD1, MYOG, MEF2A and MEF2C. Also represses expression of pro-inflammatory cytokines such as TNFA and IL1B. Involved in postnatal glycogen storage and energy metabolism (By similarity). Inhibits the premature or ectopic differentiation of preosteoblast cells during osteogenesis, possibly by changing the internal signal transduction response of osteoblasts to external growth factors (By similarity).</text>
</comment>
<comment type="subunit">
    <text evidence="1">Efficient DNA binding requires dimerization with another bHLH protein. Forms a heterodimer with TCF3/E12. Also interacts with MEF2C (By similarity).</text>
</comment>
<comment type="subcellular location">
    <subcellularLocation>
        <location evidence="2">Nucleus</location>
    </subcellularLocation>
    <subcellularLocation>
        <location evidence="1">Cytoplasm</location>
    </subcellularLocation>
    <text evidence="1">Mainly nuclear during embryonic development. Cytoplasmic in adult tissues (By similarity).</text>
</comment>
<name>TWST2_RAT</name>
<gene>
    <name type="primary">Twist2</name>
</gene>